<feature type="chain" id="PRO_0000370075" description="3-deoxy-manno-octulosonate cytidylyltransferase">
    <location>
        <begin position="1"/>
        <end position="248"/>
    </location>
</feature>
<gene>
    <name evidence="1" type="primary">kdsB</name>
    <name type="ordered locus">GFO_1823</name>
</gene>
<protein>
    <recommendedName>
        <fullName evidence="1">3-deoxy-manno-octulosonate cytidylyltransferase</fullName>
        <ecNumber evidence="1">2.7.7.38</ecNumber>
    </recommendedName>
    <alternativeName>
        <fullName evidence="1">CMP-2-keto-3-deoxyoctulosonic acid synthase</fullName>
        <shortName evidence="1">CKS</shortName>
        <shortName evidence="1">CMP-KDO synthase</shortName>
    </alternativeName>
</protein>
<keyword id="KW-0963">Cytoplasm</keyword>
<keyword id="KW-0448">Lipopolysaccharide biosynthesis</keyword>
<keyword id="KW-0548">Nucleotidyltransferase</keyword>
<keyword id="KW-0808">Transferase</keyword>
<dbReference type="EC" id="2.7.7.38" evidence="1"/>
<dbReference type="EMBL" id="CU207366">
    <property type="protein sequence ID" value="CAL66793.1"/>
    <property type="molecule type" value="Genomic_DNA"/>
</dbReference>
<dbReference type="RefSeq" id="WP_011709701.1">
    <property type="nucleotide sequence ID" value="NC_008571.1"/>
</dbReference>
<dbReference type="SMR" id="A0M2E8"/>
<dbReference type="STRING" id="411154.GFO_1823"/>
<dbReference type="KEGG" id="gfo:GFO_1823"/>
<dbReference type="eggNOG" id="COG1212">
    <property type="taxonomic scope" value="Bacteria"/>
</dbReference>
<dbReference type="HOGENOM" id="CLU_065038_0_1_10"/>
<dbReference type="OrthoDB" id="9815559at2"/>
<dbReference type="UniPathway" id="UPA00030"/>
<dbReference type="UniPathway" id="UPA00358">
    <property type="reaction ID" value="UER00476"/>
</dbReference>
<dbReference type="Proteomes" id="UP000000755">
    <property type="component" value="Chromosome"/>
</dbReference>
<dbReference type="GO" id="GO:0005829">
    <property type="term" value="C:cytosol"/>
    <property type="evidence" value="ECO:0007669"/>
    <property type="project" value="TreeGrafter"/>
</dbReference>
<dbReference type="GO" id="GO:0008690">
    <property type="term" value="F:3-deoxy-manno-octulosonate cytidylyltransferase activity"/>
    <property type="evidence" value="ECO:0007669"/>
    <property type="project" value="UniProtKB-UniRule"/>
</dbReference>
<dbReference type="GO" id="GO:0033468">
    <property type="term" value="P:CMP-keto-3-deoxy-D-manno-octulosonic acid biosynthetic process"/>
    <property type="evidence" value="ECO:0007669"/>
    <property type="project" value="UniProtKB-UniRule"/>
</dbReference>
<dbReference type="GO" id="GO:0009103">
    <property type="term" value="P:lipopolysaccharide biosynthetic process"/>
    <property type="evidence" value="ECO:0007669"/>
    <property type="project" value="UniProtKB-UniRule"/>
</dbReference>
<dbReference type="CDD" id="cd02517">
    <property type="entry name" value="CMP-KDO-Synthetase"/>
    <property type="match status" value="1"/>
</dbReference>
<dbReference type="Gene3D" id="3.90.550.10">
    <property type="entry name" value="Spore Coat Polysaccharide Biosynthesis Protein SpsA, Chain A"/>
    <property type="match status" value="1"/>
</dbReference>
<dbReference type="HAMAP" id="MF_00057">
    <property type="entry name" value="KdsB"/>
    <property type="match status" value="1"/>
</dbReference>
<dbReference type="InterPro" id="IPR003329">
    <property type="entry name" value="Cytidylyl_trans"/>
</dbReference>
<dbReference type="InterPro" id="IPR004528">
    <property type="entry name" value="KdsB"/>
</dbReference>
<dbReference type="InterPro" id="IPR029044">
    <property type="entry name" value="Nucleotide-diphossugar_trans"/>
</dbReference>
<dbReference type="NCBIfam" id="TIGR00466">
    <property type="entry name" value="kdsB"/>
    <property type="match status" value="1"/>
</dbReference>
<dbReference type="NCBIfam" id="NF003952">
    <property type="entry name" value="PRK05450.1-5"/>
    <property type="match status" value="1"/>
</dbReference>
<dbReference type="NCBIfam" id="NF009905">
    <property type="entry name" value="PRK13368.1"/>
    <property type="match status" value="1"/>
</dbReference>
<dbReference type="PANTHER" id="PTHR42866">
    <property type="entry name" value="3-DEOXY-MANNO-OCTULOSONATE CYTIDYLYLTRANSFERASE"/>
    <property type="match status" value="1"/>
</dbReference>
<dbReference type="PANTHER" id="PTHR42866:SF2">
    <property type="entry name" value="3-DEOXY-MANNO-OCTULOSONATE CYTIDYLYLTRANSFERASE, MITOCHONDRIAL"/>
    <property type="match status" value="1"/>
</dbReference>
<dbReference type="Pfam" id="PF02348">
    <property type="entry name" value="CTP_transf_3"/>
    <property type="match status" value="1"/>
</dbReference>
<dbReference type="SUPFAM" id="SSF53448">
    <property type="entry name" value="Nucleotide-diphospho-sugar transferases"/>
    <property type="match status" value="1"/>
</dbReference>
<organism>
    <name type="scientific">Christiangramia forsetii (strain DSM 17595 / CGMCC 1.15422 / KT0803)</name>
    <name type="common">Gramella forsetii</name>
    <dbReference type="NCBI Taxonomy" id="411154"/>
    <lineage>
        <taxon>Bacteria</taxon>
        <taxon>Pseudomonadati</taxon>
        <taxon>Bacteroidota</taxon>
        <taxon>Flavobacteriia</taxon>
        <taxon>Flavobacteriales</taxon>
        <taxon>Flavobacteriaceae</taxon>
        <taxon>Christiangramia</taxon>
    </lineage>
</organism>
<sequence>MKEPSKNRIVAMIPARYKASRFPGKLMKDLNGKTVIARTYEAAVNTELFDEVYVVTDSNKIFDEIVNEGGQVIRSKKEHECGSDRIAEAVENMDVDIVVNVQGDEPFIDKNSLAKLLKVFEQEGAEEIDLTSLKTPLKDSDDITNPNNVKVITGKDDFALYFSRFPIPYRRDTSANVTYYKHIGIYAFRKSALMDFYRLPMLHLEAAEKIECIRYLEYGKKIKMVETSVKSVGIDTPEDLEKARKLLS</sequence>
<evidence type="ECO:0000255" key="1">
    <source>
        <dbReference type="HAMAP-Rule" id="MF_00057"/>
    </source>
</evidence>
<comment type="function">
    <text evidence="1">Activates KDO (a required 8-carbon sugar) for incorporation into bacterial lipopolysaccharide in Gram-negative bacteria.</text>
</comment>
<comment type="catalytic activity">
    <reaction evidence="1">
        <text>3-deoxy-alpha-D-manno-oct-2-ulosonate + CTP = CMP-3-deoxy-beta-D-manno-octulosonate + diphosphate</text>
        <dbReference type="Rhea" id="RHEA:23448"/>
        <dbReference type="ChEBI" id="CHEBI:33019"/>
        <dbReference type="ChEBI" id="CHEBI:37563"/>
        <dbReference type="ChEBI" id="CHEBI:85986"/>
        <dbReference type="ChEBI" id="CHEBI:85987"/>
        <dbReference type="EC" id="2.7.7.38"/>
    </reaction>
</comment>
<comment type="pathway">
    <text evidence="1">Nucleotide-sugar biosynthesis; CMP-3-deoxy-D-manno-octulosonate biosynthesis; CMP-3-deoxy-D-manno-octulosonate from 3-deoxy-D-manno-octulosonate and CTP: step 1/1.</text>
</comment>
<comment type="pathway">
    <text evidence="1">Bacterial outer membrane biogenesis; lipopolysaccharide biosynthesis.</text>
</comment>
<comment type="subcellular location">
    <subcellularLocation>
        <location evidence="1">Cytoplasm</location>
    </subcellularLocation>
</comment>
<comment type="similarity">
    <text evidence="1">Belongs to the KdsB family.</text>
</comment>
<name>KDSB_CHRFK</name>
<reference key="1">
    <citation type="journal article" date="2006" name="Environ. Microbiol.">
        <title>Whole genome analysis of the marine Bacteroidetes'Gramella forsetii' reveals adaptations to degradation of polymeric organic matter.</title>
        <authorList>
            <person name="Bauer M."/>
            <person name="Kube M."/>
            <person name="Teeling H."/>
            <person name="Richter M."/>
            <person name="Lombardot T."/>
            <person name="Allers E."/>
            <person name="Wuerdemann C.A."/>
            <person name="Quast C."/>
            <person name="Kuhl H."/>
            <person name="Knaust F."/>
            <person name="Woebken D."/>
            <person name="Bischof K."/>
            <person name="Mussmann M."/>
            <person name="Choudhuri J.V."/>
            <person name="Meyer F."/>
            <person name="Reinhardt R."/>
            <person name="Amann R.I."/>
            <person name="Gloeckner F.O."/>
        </authorList>
    </citation>
    <scope>NUCLEOTIDE SEQUENCE [LARGE SCALE GENOMIC DNA]</scope>
    <source>
        <strain>DSM 17595 / CGMCC 1.15422 / KT0803</strain>
    </source>
</reference>
<accession>A0M2E8</accession>
<proteinExistence type="inferred from homology"/>